<gene>
    <name evidence="1" type="primary">accD</name>
    <name type="ordered locus">CLK_3068</name>
</gene>
<name>ACCD_CLOBM</name>
<evidence type="ECO:0000255" key="1">
    <source>
        <dbReference type="HAMAP-Rule" id="MF_01395"/>
    </source>
</evidence>
<evidence type="ECO:0000255" key="2">
    <source>
        <dbReference type="PROSITE-ProRule" id="PRU01136"/>
    </source>
</evidence>
<dbReference type="EC" id="2.1.3.15" evidence="1"/>
<dbReference type="EMBL" id="CP000962">
    <property type="protein sequence ID" value="ACA55450.1"/>
    <property type="molecule type" value="Genomic_DNA"/>
</dbReference>
<dbReference type="RefSeq" id="WP_012343427.1">
    <property type="nucleotide sequence ID" value="NC_010520.1"/>
</dbReference>
<dbReference type="SMR" id="B1KU65"/>
<dbReference type="KEGG" id="cbl:CLK_3068"/>
<dbReference type="HOGENOM" id="CLU_015486_1_1_9"/>
<dbReference type="UniPathway" id="UPA00655">
    <property type="reaction ID" value="UER00711"/>
</dbReference>
<dbReference type="GO" id="GO:0009317">
    <property type="term" value="C:acetyl-CoA carboxylase complex"/>
    <property type="evidence" value="ECO:0007669"/>
    <property type="project" value="InterPro"/>
</dbReference>
<dbReference type="GO" id="GO:0003989">
    <property type="term" value="F:acetyl-CoA carboxylase activity"/>
    <property type="evidence" value="ECO:0007669"/>
    <property type="project" value="InterPro"/>
</dbReference>
<dbReference type="GO" id="GO:0005524">
    <property type="term" value="F:ATP binding"/>
    <property type="evidence" value="ECO:0007669"/>
    <property type="project" value="UniProtKB-KW"/>
</dbReference>
<dbReference type="GO" id="GO:0016743">
    <property type="term" value="F:carboxyl- or carbamoyltransferase activity"/>
    <property type="evidence" value="ECO:0007669"/>
    <property type="project" value="UniProtKB-UniRule"/>
</dbReference>
<dbReference type="GO" id="GO:0008270">
    <property type="term" value="F:zinc ion binding"/>
    <property type="evidence" value="ECO:0007669"/>
    <property type="project" value="UniProtKB-UniRule"/>
</dbReference>
<dbReference type="GO" id="GO:0006633">
    <property type="term" value="P:fatty acid biosynthetic process"/>
    <property type="evidence" value="ECO:0007669"/>
    <property type="project" value="UniProtKB-KW"/>
</dbReference>
<dbReference type="GO" id="GO:2001295">
    <property type="term" value="P:malonyl-CoA biosynthetic process"/>
    <property type="evidence" value="ECO:0007669"/>
    <property type="project" value="UniProtKB-UniRule"/>
</dbReference>
<dbReference type="Gene3D" id="3.90.226.10">
    <property type="entry name" value="2-enoyl-CoA Hydratase, Chain A, domain 1"/>
    <property type="match status" value="1"/>
</dbReference>
<dbReference type="HAMAP" id="MF_01395">
    <property type="entry name" value="AcetylCoA_CT_beta"/>
    <property type="match status" value="1"/>
</dbReference>
<dbReference type="InterPro" id="IPR034733">
    <property type="entry name" value="AcCoA_carboxyl_beta"/>
</dbReference>
<dbReference type="InterPro" id="IPR000438">
    <property type="entry name" value="Acetyl_CoA_COase_Trfase_b_su"/>
</dbReference>
<dbReference type="InterPro" id="IPR029045">
    <property type="entry name" value="ClpP/crotonase-like_dom_sf"/>
</dbReference>
<dbReference type="InterPro" id="IPR011762">
    <property type="entry name" value="COA_CT_N"/>
</dbReference>
<dbReference type="InterPro" id="IPR041010">
    <property type="entry name" value="Znf-ACC"/>
</dbReference>
<dbReference type="NCBIfam" id="TIGR00515">
    <property type="entry name" value="accD"/>
    <property type="match status" value="1"/>
</dbReference>
<dbReference type="PANTHER" id="PTHR42995">
    <property type="entry name" value="ACETYL-COENZYME A CARBOXYLASE CARBOXYL TRANSFERASE SUBUNIT BETA, CHLOROPLASTIC"/>
    <property type="match status" value="1"/>
</dbReference>
<dbReference type="PANTHER" id="PTHR42995:SF5">
    <property type="entry name" value="ACETYL-COENZYME A CARBOXYLASE CARBOXYL TRANSFERASE SUBUNIT BETA, CHLOROPLASTIC"/>
    <property type="match status" value="1"/>
</dbReference>
<dbReference type="Pfam" id="PF01039">
    <property type="entry name" value="Carboxyl_trans"/>
    <property type="match status" value="1"/>
</dbReference>
<dbReference type="Pfam" id="PF17848">
    <property type="entry name" value="Zn_ribbon_ACC"/>
    <property type="match status" value="1"/>
</dbReference>
<dbReference type="PRINTS" id="PR01070">
    <property type="entry name" value="ACCCTRFRASEB"/>
</dbReference>
<dbReference type="SUPFAM" id="SSF52096">
    <property type="entry name" value="ClpP/crotonase"/>
    <property type="match status" value="1"/>
</dbReference>
<dbReference type="PROSITE" id="PS50980">
    <property type="entry name" value="COA_CT_NTER"/>
    <property type="match status" value="1"/>
</dbReference>
<organism>
    <name type="scientific">Clostridium botulinum (strain Loch Maree / Type A3)</name>
    <dbReference type="NCBI Taxonomy" id="498214"/>
    <lineage>
        <taxon>Bacteria</taxon>
        <taxon>Bacillati</taxon>
        <taxon>Bacillota</taxon>
        <taxon>Clostridia</taxon>
        <taxon>Eubacteriales</taxon>
        <taxon>Clostridiaceae</taxon>
        <taxon>Clostridium</taxon>
    </lineage>
</organism>
<protein>
    <recommendedName>
        <fullName evidence="1">Acetyl-coenzyme A carboxylase carboxyl transferase subunit beta</fullName>
        <shortName evidence="1">ACCase subunit beta</shortName>
        <shortName evidence="1">Acetyl-CoA carboxylase carboxyltransferase subunit beta</shortName>
        <ecNumber evidence="1">2.1.3.15</ecNumber>
    </recommendedName>
</protein>
<sequence>MLKNLFRKTKYITVSQKNIENYKRENTPTIPDGMWVKCNKCGEILYQNDLEKNYMACNLCGNHFRIGAKERIKYLFDKDTFKEWDYKVKTENPLSFKGYDEKIENIKEETNLSEAVTTGKGKIADMEVVVCIMDSKFMMGSMGSVVGEKITRAIERAIELRLPVIIFTVSGGARMQEGILSLMQMAKVSSALAKLDEEGLLYICVLTDPTTGGVTASFAMLGDIILAEPDALIGFAGKRVIEQTINEKLPEDFQKSEFLLEHGFIDKIVPRSDLRKVLAKLINMHKNSF</sequence>
<proteinExistence type="inferred from homology"/>
<feature type="chain" id="PRO_0000389726" description="Acetyl-coenzyme A carboxylase carboxyl transferase subunit beta">
    <location>
        <begin position="1"/>
        <end position="289"/>
    </location>
</feature>
<feature type="domain" description="CoA carboxyltransferase N-terminal" evidence="2">
    <location>
        <begin position="34"/>
        <end position="289"/>
    </location>
</feature>
<feature type="zinc finger region" description="C4-type" evidence="1">
    <location>
        <begin position="38"/>
        <end position="60"/>
    </location>
</feature>
<feature type="binding site" evidence="1">
    <location>
        <position position="38"/>
    </location>
    <ligand>
        <name>Zn(2+)</name>
        <dbReference type="ChEBI" id="CHEBI:29105"/>
    </ligand>
</feature>
<feature type="binding site" evidence="1">
    <location>
        <position position="41"/>
    </location>
    <ligand>
        <name>Zn(2+)</name>
        <dbReference type="ChEBI" id="CHEBI:29105"/>
    </ligand>
</feature>
<feature type="binding site" evidence="1">
    <location>
        <position position="57"/>
    </location>
    <ligand>
        <name>Zn(2+)</name>
        <dbReference type="ChEBI" id="CHEBI:29105"/>
    </ligand>
</feature>
<feature type="binding site" evidence="1">
    <location>
        <position position="60"/>
    </location>
    <ligand>
        <name>Zn(2+)</name>
        <dbReference type="ChEBI" id="CHEBI:29105"/>
    </ligand>
</feature>
<reference key="1">
    <citation type="journal article" date="2007" name="PLoS ONE">
        <title>Analysis of the neurotoxin complex genes in Clostridium botulinum A1-A4 and B1 strains: BoNT/A3, /Ba4 and /B1 clusters are located within plasmids.</title>
        <authorList>
            <person name="Smith T.J."/>
            <person name="Hill K.K."/>
            <person name="Foley B.T."/>
            <person name="Detter J.C."/>
            <person name="Munk A.C."/>
            <person name="Bruce D.C."/>
            <person name="Doggett N.A."/>
            <person name="Smith L.A."/>
            <person name="Marks J.D."/>
            <person name="Xie G."/>
            <person name="Brettin T.S."/>
        </authorList>
    </citation>
    <scope>NUCLEOTIDE SEQUENCE [LARGE SCALE GENOMIC DNA]</scope>
    <source>
        <strain>Loch Maree / Type A3</strain>
    </source>
</reference>
<comment type="function">
    <text evidence="1">Component of the acetyl coenzyme A carboxylase (ACC) complex. Biotin carboxylase (BC) catalyzes the carboxylation of biotin on its carrier protein (BCCP) and then the CO(2) group is transferred by the transcarboxylase to acetyl-CoA to form malonyl-CoA.</text>
</comment>
<comment type="catalytic activity">
    <reaction evidence="1">
        <text>N(6)-carboxybiotinyl-L-lysyl-[protein] + acetyl-CoA = N(6)-biotinyl-L-lysyl-[protein] + malonyl-CoA</text>
        <dbReference type="Rhea" id="RHEA:54728"/>
        <dbReference type="Rhea" id="RHEA-COMP:10505"/>
        <dbReference type="Rhea" id="RHEA-COMP:10506"/>
        <dbReference type="ChEBI" id="CHEBI:57288"/>
        <dbReference type="ChEBI" id="CHEBI:57384"/>
        <dbReference type="ChEBI" id="CHEBI:83144"/>
        <dbReference type="ChEBI" id="CHEBI:83145"/>
        <dbReference type="EC" id="2.1.3.15"/>
    </reaction>
</comment>
<comment type="cofactor">
    <cofactor evidence="1">
        <name>Zn(2+)</name>
        <dbReference type="ChEBI" id="CHEBI:29105"/>
    </cofactor>
    <text evidence="1">Binds 1 zinc ion per subunit.</text>
</comment>
<comment type="pathway">
    <text evidence="1">Lipid metabolism; malonyl-CoA biosynthesis; malonyl-CoA from acetyl-CoA: step 1/1.</text>
</comment>
<comment type="subunit">
    <text evidence="1">Acetyl-CoA carboxylase is a heterohexamer composed of biotin carboxyl carrier protein (AccB), biotin carboxylase (AccC) and two subunits each of ACCase subunit alpha (AccA) and ACCase subunit beta (AccD).</text>
</comment>
<comment type="subcellular location">
    <subcellularLocation>
        <location evidence="1">Cytoplasm</location>
    </subcellularLocation>
</comment>
<comment type="similarity">
    <text evidence="1">Belongs to the AccD/PCCB family.</text>
</comment>
<accession>B1KU65</accession>
<keyword id="KW-0067">ATP-binding</keyword>
<keyword id="KW-0963">Cytoplasm</keyword>
<keyword id="KW-0275">Fatty acid biosynthesis</keyword>
<keyword id="KW-0276">Fatty acid metabolism</keyword>
<keyword id="KW-0444">Lipid biosynthesis</keyword>
<keyword id="KW-0443">Lipid metabolism</keyword>
<keyword id="KW-0479">Metal-binding</keyword>
<keyword id="KW-0547">Nucleotide-binding</keyword>
<keyword id="KW-0808">Transferase</keyword>
<keyword id="KW-0862">Zinc</keyword>
<keyword id="KW-0863">Zinc-finger</keyword>